<organism>
    <name type="scientific">Yersinia pestis bv. Antiqua (strain Antiqua)</name>
    <dbReference type="NCBI Taxonomy" id="360102"/>
    <lineage>
        <taxon>Bacteria</taxon>
        <taxon>Pseudomonadati</taxon>
        <taxon>Pseudomonadota</taxon>
        <taxon>Gammaproteobacteria</taxon>
        <taxon>Enterobacterales</taxon>
        <taxon>Yersiniaceae</taxon>
        <taxon>Yersinia</taxon>
    </lineage>
</organism>
<accession>Q1C5J4</accession>
<proteinExistence type="inferred from homology"/>
<reference key="1">
    <citation type="journal article" date="2006" name="J. Bacteriol.">
        <title>Complete genome sequence of Yersinia pestis strains Antiqua and Nepal516: evidence of gene reduction in an emerging pathogen.</title>
        <authorList>
            <person name="Chain P.S.G."/>
            <person name="Hu P."/>
            <person name="Malfatti S.A."/>
            <person name="Radnedge L."/>
            <person name="Larimer F."/>
            <person name="Vergez L.M."/>
            <person name="Worsham P."/>
            <person name="Chu M.C."/>
            <person name="Andersen G.L."/>
        </authorList>
    </citation>
    <scope>NUCLEOTIDE SEQUENCE [LARGE SCALE GENOMIC DNA]</scope>
    <source>
        <strain>Antiqua</strain>
    </source>
</reference>
<sequence length="459" mass="52098">MSQSSASSIFTVSRLNQTVRELLEREMGQIWLTAEISNFSQPASGHWYFTLKDDRAQVRCAMFRNSNRRTTFRPQNGQQVLVRASITLYEPRGDYQLIAESMQPAGDGLLQQQFEQLKQQLAAEGLFDQSHKQPLPHPAKQVGVITSASGAALHDVLHVLQRRDPSLPVIIYPTSVQGVDAPLQIVRAIQLANLRAECDVLIVGRGGGSLEDLWSFNDERVARAIFNSHIPIVSAVGHETDVTIADFVADLRAPTPSAAAELVSRNQIELVRQIQGQQQRMEMAMDYYLAQRNQQFTRLEHRLQQQHPHLRLARQQTLLLKLQRRLEESAQTQIRLLSKRTERLQQRLQQVQPQGQIHRYNQRVQQQEYRLRQAVERQLNGYRQRFGIACSQLEAVSPLATLARGYSVTQTPAGALLKTTKQVQAGDKLTTRLQDGWVESEITQVTVAKKSRQKKVVTQ</sequence>
<dbReference type="EC" id="3.1.11.6" evidence="1"/>
<dbReference type="EMBL" id="CP000308">
    <property type="protein sequence ID" value="ABG14278.1"/>
    <property type="molecule type" value="Genomic_DNA"/>
</dbReference>
<dbReference type="RefSeq" id="WP_002209810.1">
    <property type="nucleotide sequence ID" value="NZ_CP009906.1"/>
</dbReference>
<dbReference type="SMR" id="Q1C5J4"/>
<dbReference type="GeneID" id="57975829"/>
<dbReference type="KEGG" id="ypa:YPA_2313"/>
<dbReference type="Proteomes" id="UP000001971">
    <property type="component" value="Chromosome"/>
</dbReference>
<dbReference type="GO" id="GO:0005737">
    <property type="term" value="C:cytoplasm"/>
    <property type="evidence" value="ECO:0007669"/>
    <property type="project" value="UniProtKB-SubCell"/>
</dbReference>
<dbReference type="GO" id="GO:0009318">
    <property type="term" value="C:exodeoxyribonuclease VII complex"/>
    <property type="evidence" value="ECO:0007669"/>
    <property type="project" value="InterPro"/>
</dbReference>
<dbReference type="GO" id="GO:0008855">
    <property type="term" value="F:exodeoxyribonuclease VII activity"/>
    <property type="evidence" value="ECO:0007669"/>
    <property type="project" value="UniProtKB-UniRule"/>
</dbReference>
<dbReference type="GO" id="GO:0003676">
    <property type="term" value="F:nucleic acid binding"/>
    <property type="evidence" value="ECO:0007669"/>
    <property type="project" value="InterPro"/>
</dbReference>
<dbReference type="GO" id="GO:0006308">
    <property type="term" value="P:DNA catabolic process"/>
    <property type="evidence" value="ECO:0007669"/>
    <property type="project" value="UniProtKB-UniRule"/>
</dbReference>
<dbReference type="CDD" id="cd04489">
    <property type="entry name" value="ExoVII_LU_OBF"/>
    <property type="match status" value="1"/>
</dbReference>
<dbReference type="HAMAP" id="MF_00378">
    <property type="entry name" value="Exonuc_7_L"/>
    <property type="match status" value="1"/>
</dbReference>
<dbReference type="InterPro" id="IPR003753">
    <property type="entry name" value="Exonuc_VII_L"/>
</dbReference>
<dbReference type="InterPro" id="IPR020579">
    <property type="entry name" value="Exonuc_VII_lsu_C"/>
</dbReference>
<dbReference type="InterPro" id="IPR025824">
    <property type="entry name" value="OB-fold_nuc-bd_dom"/>
</dbReference>
<dbReference type="NCBIfam" id="TIGR00237">
    <property type="entry name" value="xseA"/>
    <property type="match status" value="1"/>
</dbReference>
<dbReference type="PANTHER" id="PTHR30008">
    <property type="entry name" value="EXODEOXYRIBONUCLEASE 7 LARGE SUBUNIT"/>
    <property type="match status" value="1"/>
</dbReference>
<dbReference type="PANTHER" id="PTHR30008:SF0">
    <property type="entry name" value="EXODEOXYRIBONUCLEASE 7 LARGE SUBUNIT"/>
    <property type="match status" value="1"/>
</dbReference>
<dbReference type="Pfam" id="PF02601">
    <property type="entry name" value="Exonuc_VII_L"/>
    <property type="match status" value="1"/>
</dbReference>
<dbReference type="Pfam" id="PF13742">
    <property type="entry name" value="tRNA_anti_2"/>
    <property type="match status" value="1"/>
</dbReference>
<comment type="function">
    <text evidence="1">Bidirectionally degrades single-stranded DNA into large acid-insoluble oligonucleotides, which are then degraded further into small acid-soluble oligonucleotides.</text>
</comment>
<comment type="catalytic activity">
    <reaction evidence="1">
        <text>Exonucleolytic cleavage in either 5'- to 3'- or 3'- to 5'-direction to yield nucleoside 5'-phosphates.</text>
        <dbReference type="EC" id="3.1.11.6"/>
    </reaction>
</comment>
<comment type="subunit">
    <text evidence="1">Heterooligomer composed of large and small subunits.</text>
</comment>
<comment type="subcellular location">
    <subcellularLocation>
        <location evidence="1">Cytoplasm</location>
    </subcellularLocation>
</comment>
<comment type="similarity">
    <text evidence="1">Belongs to the XseA family.</text>
</comment>
<protein>
    <recommendedName>
        <fullName evidence="1">Exodeoxyribonuclease 7 large subunit</fullName>
        <ecNumber evidence="1">3.1.11.6</ecNumber>
    </recommendedName>
    <alternativeName>
        <fullName evidence="1">Exodeoxyribonuclease VII large subunit</fullName>
        <shortName evidence="1">Exonuclease VII large subunit</shortName>
    </alternativeName>
</protein>
<feature type="chain" id="PRO_0000273705" description="Exodeoxyribonuclease 7 large subunit">
    <location>
        <begin position="1"/>
        <end position="459"/>
    </location>
</feature>
<name>EX7L_YERPA</name>
<evidence type="ECO:0000255" key="1">
    <source>
        <dbReference type="HAMAP-Rule" id="MF_00378"/>
    </source>
</evidence>
<gene>
    <name evidence="1" type="primary">xseA</name>
    <name type="ordered locus">YPA_2313</name>
</gene>
<keyword id="KW-0963">Cytoplasm</keyword>
<keyword id="KW-0269">Exonuclease</keyword>
<keyword id="KW-0378">Hydrolase</keyword>
<keyword id="KW-0540">Nuclease</keyword>